<proteinExistence type="inferred from homology"/>
<keyword id="KW-0963">Cytoplasm</keyword>
<keyword id="KW-0312">Gluconeogenesis</keyword>
<keyword id="KW-0324">Glycolysis</keyword>
<keyword id="KW-0413">Isomerase</keyword>
<comment type="function">
    <text evidence="1">Catalyzes the reversible isomerization of glucose-6-phosphate to fructose-6-phosphate.</text>
</comment>
<comment type="catalytic activity">
    <reaction evidence="1">
        <text>alpha-D-glucose 6-phosphate = beta-D-fructose 6-phosphate</text>
        <dbReference type="Rhea" id="RHEA:11816"/>
        <dbReference type="ChEBI" id="CHEBI:57634"/>
        <dbReference type="ChEBI" id="CHEBI:58225"/>
        <dbReference type="EC" id="5.3.1.9"/>
    </reaction>
</comment>
<comment type="pathway">
    <text evidence="1">Carbohydrate biosynthesis; gluconeogenesis.</text>
</comment>
<comment type="pathway">
    <text evidence="1">Carbohydrate degradation; glycolysis; D-glyceraldehyde 3-phosphate and glycerone phosphate from D-glucose: step 2/4.</text>
</comment>
<comment type="subcellular location">
    <subcellularLocation>
        <location evidence="1">Cytoplasm</location>
    </subcellularLocation>
</comment>
<comment type="similarity">
    <text evidence="1">Belongs to the GPI family.</text>
</comment>
<protein>
    <recommendedName>
        <fullName evidence="1">Glucose-6-phosphate isomerase</fullName>
        <shortName evidence="1">GPI</shortName>
        <ecNumber evidence="1">5.3.1.9</ecNumber>
    </recommendedName>
    <alternativeName>
        <fullName evidence="1">Phosphoglucose isomerase</fullName>
        <shortName evidence="1">PGI</shortName>
    </alternativeName>
    <alternativeName>
        <fullName evidence="1">Phosphohexose isomerase</fullName>
        <shortName evidence="1">PHI</shortName>
    </alternativeName>
</protein>
<name>G6PI_STRP3</name>
<evidence type="ECO:0000255" key="1">
    <source>
        <dbReference type="HAMAP-Rule" id="MF_00473"/>
    </source>
</evidence>
<gene>
    <name evidence="1" type="primary">pgi</name>
    <name type="ordered locus">SpyM3_0156</name>
</gene>
<sequence>MSHITFDYSKVLESFAGQHEIDFLQGQVTEADKLLREGTGPGSDFLGWLDLPENYDEEEFARILTAAEKIKSDSEVLVVIGIGGSYLGAKAAIDFLNHHFANLQTAKERKAPQILYAGNSISSTYLADLVEYVQDKEFSVNVISKSGTTTEPAIAFRVFKELLVKKYGQEEASKRIYATTDKVKGAVKVEADANNWETFVVPDNVGGRFSVLTAVGLLPIAASGADITALMEGANAARKDLSSDKISENIAYQYAAVRNLLYRKGYITEILANYEPSLQYFGEWWKQLAGESEGKDQKGIYPTSANFSTDLHSLGQFIQEGYRNLFETVIRVDNPRKNVIIPELAEDLDGLGYLQGKDVDFVNKKATDGVLLAHTDGGVPNMFVTLPAQDEFTLGYTIYFFELAIAVSGYMNAVNPFDQPGVEAYKRNMFALLGKPGFEALSAELNARL</sequence>
<dbReference type="EC" id="5.3.1.9" evidence="1"/>
<dbReference type="EMBL" id="AE014074">
    <property type="protein sequence ID" value="AAM78763.1"/>
    <property type="molecule type" value="Genomic_DNA"/>
</dbReference>
<dbReference type="RefSeq" id="WP_011054153.1">
    <property type="nucleotide sequence ID" value="NC_004070.1"/>
</dbReference>
<dbReference type="SMR" id="P0DB24"/>
<dbReference type="KEGG" id="spg:SpyM3_0156"/>
<dbReference type="HOGENOM" id="CLU_037303_0_1_9"/>
<dbReference type="UniPathway" id="UPA00109">
    <property type="reaction ID" value="UER00181"/>
</dbReference>
<dbReference type="UniPathway" id="UPA00138"/>
<dbReference type="Proteomes" id="UP000000564">
    <property type="component" value="Chromosome"/>
</dbReference>
<dbReference type="GO" id="GO:0005829">
    <property type="term" value="C:cytosol"/>
    <property type="evidence" value="ECO:0007669"/>
    <property type="project" value="TreeGrafter"/>
</dbReference>
<dbReference type="GO" id="GO:0097367">
    <property type="term" value="F:carbohydrate derivative binding"/>
    <property type="evidence" value="ECO:0007669"/>
    <property type="project" value="InterPro"/>
</dbReference>
<dbReference type="GO" id="GO:0004347">
    <property type="term" value="F:glucose-6-phosphate isomerase activity"/>
    <property type="evidence" value="ECO:0007669"/>
    <property type="project" value="UniProtKB-UniRule"/>
</dbReference>
<dbReference type="GO" id="GO:0048029">
    <property type="term" value="F:monosaccharide binding"/>
    <property type="evidence" value="ECO:0007669"/>
    <property type="project" value="TreeGrafter"/>
</dbReference>
<dbReference type="GO" id="GO:0006094">
    <property type="term" value="P:gluconeogenesis"/>
    <property type="evidence" value="ECO:0007669"/>
    <property type="project" value="UniProtKB-UniRule"/>
</dbReference>
<dbReference type="GO" id="GO:0051156">
    <property type="term" value="P:glucose 6-phosphate metabolic process"/>
    <property type="evidence" value="ECO:0007669"/>
    <property type="project" value="TreeGrafter"/>
</dbReference>
<dbReference type="GO" id="GO:0006096">
    <property type="term" value="P:glycolytic process"/>
    <property type="evidence" value="ECO:0007669"/>
    <property type="project" value="UniProtKB-UniRule"/>
</dbReference>
<dbReference type="CDD" id="cd05015">
    <property type="entry name" value="SIS_PGI_1"/>
    <property type="match status" value="1"/>
</dbReference>
<dbReference type="CDD" id="cd05016">
    <property type="entry name" value="SIS_PGI_2"/>
    <property type="match status" value="1"/>
</dbReference>
<dbReference type="FunFam" id="3.40.50.10490:FF:000015">
    <property type="entry name" value="Glucose-6-phosphate isomerase"/>
    <property type="match status" value="1"/>
</dbReference>
<dbReference type="FunFam" id="3.40.50.10490:FF:000016">
    <property type="entry name" value="Glucose-6-phosphate isomerase"/>
    <property type="match status" value="1"/>
</dbReference>
<dbReference type="Gene3D" id="3.40.50.10490">
    <property type="entry name" value="Glucose-6-phosphate isomerase like protein, domain 1"/>
    <property type="match status" value="2"/>
</dbReference>
<dbReference type="HAMAP" id="MF_00473">
    <property type="entry name" value="G6P_isomerase"/>
    <property type="match status" value="1"/>
</dbReference>
<dbReference type="InterPro" id="IPR001672">
    <property type="entry name" value="G6P_Isomerase"/>
</dbReference>
<dbReference type="InterPro" id="IPR018189">
    <property type="entry name" value="Phosphoglucose_isomerase_CS"/>
</dbReference>
<dbReference type="InterPro" id="IPR046348">
    <property type="entry name" value="SIS_dom_sf"/>
</dbReference>
<dbReference type="InterPro" id="IPR035476">
    <property type="entry name" value="SIS_PGI_1"/>
</dbReference>
<dbReference type="InterPro" id="IPR035482">
    <property type="entry name" value="SIS_PGI_2"/>
</dbReference>
<dbReference type="NCBIfam" id="NF010697">
    <property type="entry name" value="PRK14097.1"/>
    <property type="match status" value="1"/>
</dbReference>
<dbReference type="PANTHER" id="PTHR11469">
    <property type="entry name" value="GLUCOSE-6-PHOSPHATE ISOMERASE"/>
    <property type="match status" value="1"/>
</dbReference>
<dbReference type="PANTHER" id="PTHR11469:SF1">
    <property type="entry name" value="GLUCOSE-6-PHOSPHATE ISOMERASE"/>
    <property type="match status" value="1"/>
</dbReference>
<dbReference type="Pfam" id="PF00342">
    <property type="entry name" value="PGI"/>
    <property type="match status" value="1"/>
</dbReference>
<dbReference type="PRINTS" id="PR00662">
    <property type="entry name" value="G6PISOMERASE"/>
</dbReference>
<dbReference type="SUPFAM" id="SSF53697">
    <property type="entry name" value="SIS domain"/>
    <property type="match status" value="1"/>
</dbReference>
<dbReference type="PROSITE" id="PS00765">
    <property type="entry name" value="P_GLUCOSE_ISOMERASE_1"/>
    <property type="match status" value="1"/>
</dbReference>
<dbReference type="PROSITE" id="PS00174">
    <property type="entry name" value="P_GLUCOSE_ISOMERASE_2"/>
    <property type="match status" value="1"/>
</dbReference>
<dbReference type="PROSITE" id="PS51463">
    <property type="entry name" value="P_GLUCOSE_ISOMERASE_3"/>
    <property type="match status" value="1"/>
</dbReference>
<reference key="1">
    <citation type="journal article" date="2002" name="Proc. Natl. Acad. Sci. U.S.A.">
        <title>Genome sequence of a serotype M3 strain of group A Streptococcus: phage-encoded toxins, the high-virulence phenotype, and clone emergence.</title>
        <authorList>
            <person name="Beres S.B."/>
            <person name="Sylva G.L."/>
            <person name="Barbian K.D."/>
            <person name="Lei B."/>
            <person name="Hoff J.S."/>
            <person name="Mammarella N.D."/>
            <person name="Liu M.-Y."/>
            <person name="Smoot J.C."/>
            <person name="Porcella S.F."/>
            <person name="Parkins L.D."/>
            <person name="Campbell D.S."/>
            <person name="Smith T.M."/>
            <person name="McCormick J.K."/>
            <person name="Leung D.Y.M."/>
            <person name="Schlievert P.M."/>
            <person name="Musser J.M."/>
        </authorList>
    </citation>
    <scope>NUCLEOTIDE SEQUENCE [LARGE SCALE GENOMIC DNA]</scope>
    <source>
        <strain>ATCC BAA-595 / MGAS315</strain>
    </source>
</reference>
<organism>
    <name type="scientific">Streptococcus pyogenes serotype M3 (strain ATCC BAA-595 / MGAS315)</name>
    <dbReference type="NCBI Taxonomy" id="198466"/>
    <lineage>
        <taxon>Bacteria</taxon>
        <taxon>Bacillati</taxon>
        <taxon>Bacillota</taxon>
        <taxon>Bacilli</taxon>
        <taxon>Lactobacillales</taxon>
        <taxon>Streptococcaceae</taxon>
        <taxon>Streptococcus</taxon>
    </lineage>
</organism>
<feature type="chain" id="PRO_0000180743" description="Glucose-6-phosphate isomerase">
    <location>
        <begin position="1"/>
        <end position="449"/>
    </location>
</feature>
<feature type="active site" description="Proton donor" evidence="1">
    <location>
        <position position="291"/>
    </location>
</feature>
<feature type="active site" evidence="1">
    <location>
        <position position="312"/>
    </location>
</feature>
<feature type="active site" evidence="1">
    <location>
        <position position="426"/>
    </location>
</feature>
<accession>P0DB24</accession>
<accession>Q8K8Q6</accession>